<evidence type="ECO:0000255" key="1">
    <source>
        <dbReference type="HAMAP-Rule" id="MF_00624"/>
    </source>
</evidence>
<feature type="chain" id="PRO_0000261878" description="Glucose-1-phosphate adenylyltransferase">
    <location>
        <begin position="1"/>
        <end position="429"/>
    </location>
</feature>
<feature type="binding site" evidence="1">
    <location>
        <position position="116"/>
    </location>
    <ligand>
        <name>alpha-D-glucose 1-phosphate</name>
        <dbReference type="ChEBI" id="CHEBI:58601"/>
    </ligand>
</feature>
<feature type="binding site" evidence="1">
    <location>
        <position position="181"/>
    </location>
    <ligand>
        <name>alpha-D-glucose 1-phosphate</name>
        <dbReference type="ChEBI" id="CHEBI:58601"/>
    </ligand>
</feature>
<feature type="binding site" evidence="1">
    <location>
        <begin position="196"/>
        <end position="197"/>
    </location>
    <ligand>
        <name>alpha-D-glucose 1-phosphate</name>
        <dbReference type="ChEBI" id="CHEBI:58601"/>
    </ligand>
</feature>
<feature type="binding site" evidence="1">
    <location>
        <position position="214"/>
    </location>
    <ligand>
        <name>alpha-D-glucose 1-phosphate</name>
        <dbReference type="ChEBI" id="CHEBI:58601"/>
    </ligand>
</feature>
<comment type="function">
    <text evidence="1">Involved in the biosynthesis of ADP-glucose, a building block required for the elongation reactions to produce glycogen. Catalyzes the reaction between ATP and alpha-D-glucose 1-phosphate (G1P) to produce pyrophosphate and ADP-Glc.</text>
</comment>
<comment type="catalytic activity">
    <reaction evidence="1">
        <text>alpha-D-glucose 1-phosphate + ATP + H(+) = ADP-alpha-D-glucose + diphosphate</text>
        <dbReference type="Rhea" id="RHEA:12120"/>
        <dbReference type="ChEBI" id="CHEBI:15378"/>
        <dbReference type="ChEBI" id="CHEBI:30616"/>
        <dbReference type="ChEBI" id="CHEBI:33019"/>
        <dbReference type="ChEBI" id="CHEBI:57498"/>
        <dbReference type="ChEBI" id="CHEBI:58601"/>
        <dbReference type="EC" id="2.7.7.27"/>
    </reaction>
</comment>
<comment type="pathway">
    <text evidence="1">Glycan biosynthesis; glycogen biosynthesis.</text>
</comment>
<comment type="subunit">
    <text evidence="1">Homotetramer.</text>
</comment>
<comment type="similarity">
    <text evidence="1">Belongs to the bacterial/plant glucose-1-phosphate adenylyltransferase family.</text>
</comment>
<keyword id="KW-0067">ATP-binding</keyword>
<keyword id="KW-0119">Carbohydrate metabolism</keyword>
<keyword id="KW-0320">Glycogen biosynthesis</keyword>
<keyword id="KW-0321">Glycogen metabolism</keyword>
<keyword id="KW-0547">Nucleotide-binding</keyword>
<keyword id="KW-0548">Nucleotidyltransferase</keyword>
<keyword id="KW-0808">Transferase</keyword>
<sequence length="429" mass="47918">MFDPTERGTAIDIEVNDRLRKTLALILAGGRGSRLMDLTDWHAKPAIPFAGKFRIVDFTLSNCINSGIRRIGVLTQYKAHSLLQHIQRGWGFLRGEFNEFIELLPAQQRTQGENWYKGTADAVFQNLDIIHAHRPEHVLVLAGDHVYKMHYGKMLAHHLAAGADVTVACIEVPLETAKGFGVMAVDEDDRVIRFDEKPDHPQPMPGHPDQALASMGIYIFNAQLLFDLLQKDSINPETSHDFGKDIIPSLVKSHRVIAHHFQDSCVMHEGAREHYWRDVGTIDAYWEANIDLTTVTPALNLYDESWPIWTDQPQSPPAKFVFDSEHRRGMAVDSLVAGGCIVSGAVVRRSMLFSNVRVNSFCVVEDAVILPNVDIGRHARLKRCIVDQGVVVPPGLVVGEDPVLDAKRFHRTEKGITLVTAEKLKLLGA</sequence>
<proteinExistence type="inferred from homology"/>
<organism>
    <name type="scientific">Paramagnetospirillum magneticum (strain ATCC 700264 / AMB-1)</name>
    <name type="common">Magnetospirillum magneticum</name>
    <dbReference type="NCBI Taxonomy" id="342108"/>
    <lineage>
        <taxon>Bacteria</taxon>
        <taxon>Pseudomonadati</taxon>
        <taxon>Pseudomonadota</taxon>
        <taxon>Alphaproteobacteria</taxon>
        <taxon>Rhodospirillales</taxon>
        <taxon>Magnetospirillaceae</taxon>
        <taxon>Paramagnetospirillum</taxon>
    </lineage>
</organism>
<protein>
    <recommendedName>
        <fullName evidence="1">Glucose-1-phosphate adenylyltransferase</fullName>
        <ecNumber evidence="1">2.7.7.27</ecNumber>
    </recommendedName>
    <alternativeName>
        <fullName evidence="1">ADP-glucose pyrophosphorylase</fullName>
        <shortName evidence="1">ADPGlc PPase</shortName>
    </alternativeName>
    <alternativeName>
        <fullName evidence="1">ADP-glucose synthase</fullName>
    </alternativeName>
</protein>
<gene>
    <name evidence="1" type="primary">glgC</name>
    <name type="ordered locus">amb2110</name>
</gene>
<accession>Q2W5G1</accession>
<dbReference type="EC" id="2.7.7.27" evidence="1"/>
<dbReference type="EMBL" id="AP007255">
    <property type="protein sequence ID" value="BAE50914.1"/>
    <property type="molecule type" value="Genomic_DNA"/>
</dbReference>
<dbReference type="RefSeq" id="WP_011384509.1">
    <property type="nucleotide sequence ID" value="NC_007626.1"/>
</dbReference>
<dbReference type="SMR" id="Q2W5G1"/>
<dbReference type="STRING" id="342108.amb2110"/>
<dbReference type="KEGG" id="mag:amb2110"/>
<dbReference type="HOGENOM" id="CLU_029499_14_1_5"/>
<dbReference type="OrthoDB" id="9801810at2"/>
<dbReference type="UniPathway" id="UPA00164"/>
<dbReference type="Proteomes" id="UP000007058">
    <property type="component" value="Chromosome"/>
</dbReference>
<dbReference type="GO" id="GO:0005524">
    <property type="term" value="F:ATP binding"/>
    <property type="evidence" value="ECO:0007669"/>
    <property type="project" value="UniProtKB-KW"/>
</dbReference>
<dbReference type="GO" id="GO:0008878">
    <property type="term" value="F:glucose-1-phosphate adenylyltransferase activity"/>
    <property type="evidence" value="ECO:0007669"/>
    <property type="project" value="UniProtKB-UniRule"/>
</dbReference>
<dbReference type="GO" id="GO:0005978">
    <property type="term" value="P:glycogen biosynthetic process"/>
    <property type="evidence" value="ECO:0007669"/>
    <property type="project" value="UniProtKB-UniRule"/>
</dbReference>
<dbReference type="CDD" id="cd02508">
    <property type="entry name" value="ADP_Glucose_PP"/>
    <property type="match status" value="1"/>
</dbReference>
<dbReference type="CDD" id="cd04651">
    <property type="entry name" value="LbH_G1P_AT_C"/>
    <property type="match status" value="1"/>
</dbReference>
<dbReference type="Gene3D" id="2.160.10.10">
    <property type="entry name" value="Hexapeptide repeat proteins"/>
    <property type="match status" value="1"/>
</dbReference>
<dbReference type="Gene3D" id="3.90.550.10">
    <property type="entry name" value="Spore Coat Polysaccharide Biosynthesis Protein SpsA, Chain A"/>
    <property type="match status" value="1"/>
</dbReference>
<dbReference type="HAMAP" id="MF_00624">
    <property type="entry name" value="GlgC"/>
    <property type="match status" value="1"/>
</dbReference>
<dbReference type="InterPro" id="IPR011831">
    <property type="entry name" value="ADP-Glc_PPase"/>
</dbReference>
<dbReference type="InterPro" id="IPR005836">
    <property type="entry name" value="ADP_Glu_pyroP_CS"/>
</dbReference>
<dbReference type="InterPro" id="IPR023049">
    <property type="entry name" value="GlgC_bac"/>
</dbReference>
<dbReference type="InterPro" id="IPR056818">
    <property type="entry name" value="GlmU/GlgC-like_hexapep"/>
</dbReference>
<dbReference type="InterPro" id="IPR005835">
    <property type="entry name" value="NTP_transferase_dom"/>
</dbReference>
<dbReference type="InterPro" id="IPR029044">
    <property type="entry name" value="Nucleotide-diphossugar_trans"/>
</dbReference>
<dbReference type="InterPro" id="IPR011004">
    <property type="entry name" value="Trimer_LpxA-like_sf"/>
</dbReference>
<dbReference type="NCBIfam" id="TIGR02091">
    <property type="entry name" value="glgC"/>
    <property type="match status" value="1"/>
</dbReference>
<dbReference type="NCBIfam" id="NF001947">
    <property type="entry name" value="PRK00725.1"/>
    <property type="match status" value="1"/>
</dbReference>
<dbReference type="NCBIfam" id="NF002023">
    <property type="entry name" value="PRK00844.1"/>
    <property type="match status" value="1"/>
</dbReference>
<dbReference type="PANTHER" id="PTHR43523:SF2">
    <property type="entry name" value="GLUCOSE-1-PHOSPHATE ADENYLYLTRANSFERASE"/>
    <property type="match status" value="1"/>
</dbReference>
<dbReference type="PANTHER" id="PTHR43523">
    <property type="entry name" value="GLUCOSE-1-PHOSPHATE ADENYLYLTRANSFERASE-RELATED"/>
    <property type="match status" value="1"/>
</dbReference>
<dbReference type="Pfam" id="PF24894">
    <property type="entry name" value="Hexapep_GlmU"/>
    <property type="match status" value="1"/>
</dbReference>
<dbReference type="Pfam" id="PF00483">
    <property type="entry name" value="NTP_transferase"/>
    <property type="match status" value="1"/>
</dbReference>
<dbReference type="SUPFAM" id="SSF53448">
    <property type="entry name" value="Nucleotide-diphospho-sugar transferases"/>
    <property type="match status" value="1"/>
</dbReference>
<dbReference type="SUPFAM" id="SSF51161">
    <property type="entry name" value="Trimeric LpxA-like enzymes"/>
    <property type="match status" value="1"/>
</dbReference>
<dbReference type="PROSITE" id="PS00809">
    <property type="entry name" value="ADP_GLC_PYROPHOSPH_2"/>
    <property type="match status" value="1"/>
</dbReference>
<dbReference type="PROSITE" id="PS00810">
    <property type="entry name" value="ADP_GLC_PYROPHOSPH_3"/>
    <property type="match status" value="1"/>
</dbReference>
<name>GLGC_PARM1</name>
<reference key="1">
    <citation type="journal article" date="2005" name="DNA Res.">
        <title>Complete genome sequence of the facultative anaerobic magnetotactic bacterium Magnetospirillum sp. strain AMB-1.</title>
        <authorList>
            <person name="Matsunaga T."/>
            <person name="Okamura Y."/>
            <person name="Fukuda Y."/>
            <person name="Wahyudi A.T."/>
            <person name="Murase Y."/>
            <person name="Takeyama H."/>
        </authorList>
    </citation>
    <scope>NUCLEOTIDE SEQUENCE [LARGE SCALE GENOMIC DNA]</scope>
    <source>
        <strain>ATCC 700264 / AMB-1</strain>
    </source>
</reference>